<protein>
    <recommendedName>
        <fullName evidence="3">Large ribosomal subunit protein eL37</fullName>
    </recommendedName>
    <alternativeName>
        <fullName>50S ribosomal protein L37e</fullName>
    </alternativeName>
</protein>
<proteinExistence type="inferred from homology"/>
<name>RL37_METAC</name>
<sequence>MSKGTSSMGKRQKRTHAKCRRCGSVSFNVHTKQCTSCGFGKTSRMRTYKWQAKCKY</sequence>
<keyword id="KW-0479">Metal-binding</keyword>
<keyword id="KW-1185">Reference proteome</keyword>
<keyword id="KW-0687">Ribonucleoprotein</keyword>
<keyword id="KW-0689">Ribosomal protein</keyword>
<keyword id="KW-0694">RNA-binding</keyword>
<keyword id="KW-0699">rRNA-binding</keyword>
<keyword id="KW-0862">Zinc</keyword>
<keyword id="KW-0863">Zinc-finger</keyword>
<comment type="function">
    <text evidence="1">Binds to the 23S rRNA.</text>
</comment>
<comment type="cofactor">
    <cofactor evidence="1">
        <name>Zn(2+)</name>
        <dbReference type="ChEBI" id="CHEBI:29105"/>
    </cofactor>
    <text evidence="1">Binds 1 zinc ion per subunit.</text>
</comment>
<comment type="similarity">
    <text evidence="3">Belongs to the eukaryotic ribosomal protein eL37 family.</text>
</comment>
<accession>Q8TL48</accession>
<reference key="1">
    <citation type="journal article" date="2002" name="Genome Res.">
        <title>The genome of Methanosarcina acetivorans reveals extensive metabolic and physiological diversity.</title>
        <authorList>
            <person name="Galagan J.E."/>
            <person name="Nusbaum C."/>
            <person name="Roy A."/>
            <person name="Endrizzi M.G."/>
            <person name="Macdonald P."/>
            <person name="FitzHugh W."/>
            <person name="Calvo S."/>
            <person name="Engels R."/>
            <person name="Smirnov S."/>
            <person name="Atnoor D."/>
            <person name="Brown A."/>
            <person name="Allen N."/>
            <person name="Naylor J."/>
            <person name="Stange-Thomann N."/>
            <person name="DeArellano K."/>
            <person name="Johnson R."/>
            <person name="Linton L."/>
            <person name="McEwan P."/>
            <person name="McKernan K."/>
            <person name="Talamas J."/>
            <person name="Tirrell A."/>
            <person name="Ye W."/>
            <person name="Zimmer A."/>
            <person name="Barber R.D."/>
            <person name="Cann I."/>
            <person name="Graham D.E."/>
            <person name="Grahame D.A."/>
            <person name="Guss A.M."/>
            <person name="Hedderich R."/>
            <person name="Ingram-Smith C."/>
            <person name="Kuettner H.C."/>
            <person name="Krzycki J.A."/>
            <person name="Leigh J.A."/>
            <person name="Li W."/>
            <person name="Liu J."/>
            <person name="Mukhopadhyay B."/>
            <person name="Reeve J.N."/>
            <person name="Smith K."/>
            <person name="Springer T.A."/>
            <person name="Umayam L.A."/>
            <person name="White O."/>
            <person name="White R.H."/>
            <person name="de Macario E.C."/>
            <person name="Ferry J.G."/>
            <person name="Jarrell K.F."/>
            <person name="Jing H."/>
            <person name="Macario A.J.L."/>
            <person name="Paulsen I.T."/>
            <person name="Pritchett M."/>
            <person name="Sowers K.R."/>
            <person name="Swanson R.V."/>
            <person name="Zinder S.H."/>
            <person name="Lander E."/>
            <person name="Metcalf W.W."/>
            <person name="Birren B."/>
        </authorList>
    </citation>
    <scope>NUCLEOTIDE SEQUENCE [LARGE SCALE GENOMIC DNA]</scope>
    <source>
        <strain>ATCC 35395 / DSM 2834 / JCM 12185 / C2A</strain>
    </source>
</reference>
<feature type="chain" id="PRO_0000139728" description="Large ribosomal subunit protein eL37">
    <location>
        <begin position="1"/>
        <end position="56"/>
    </location>
</feature>
<feature type="zinc finger region" description="C4-type" evidence="2">
    <location>
        <begin position="19"/>
        <end position="37"/>
    </location>
</feature>
<feature type="binding site" evidence="1">
    <location>
        <position position="19"/>
    </location>
    <ligand>
        <name>Zn(2+)</name>
        <dbReference type="ChEBI" id="CHEBI:29105"/>
    </ligand>
</feature>
<feature type="binding site" evidence="1">
    <location>
        <position position="22"/>
    </location>
    <ligand>
        <name>Zn(2+)</name>
        <dbReference type="ChEBI" id="CHEBI:29105"/>
    </ligand>
</feature>
<feature type="binding site" evidence="1">
    <location>
        <position position="34"/>
    </location>
    <ligand>
        <name>Zn(2+)</name>
        <dbReference type="ChEBI" id="CHEBI:29105"/>
    </ligand>
</feature>
<feature type="binding site" evidence="1">
    <location>
        <position position="37"/>
    </location>
    <ligand>
        <name>Zn(2+)</name>
        <dbReference type="ChEBI" id="CHEBI:29105"/>
    </ligand>
</feature>
<dbReference type="EMBL" id="AE010299">
    <property type="protein sequence ID" value="AAM06565.1"/>
    <property type="molecule type" value="Genomic_DNA"/>
</dbReference>
<dbReference type="SMR" id="Q8TL48"/>
<dbReference type="FunCoup" id="Q8TL48">
    <property type="interactions" value="108"/>
</dbReference>
<dbReference type="STRING" id="188937.MA_3194"/>
<dbReference type="EnsemblBacteria" id="AAM06565">
    <property type="protein sequence ID" value="AAM06565"/>
    <property type="gene ID" value="MA_3194"/>
</dbReference>
<dbReference type="KEGG" id="mac:MA_3194"/>
<dbReference type="HOGENOM" id="CLU_208825_0_0_2"/>
<dbReference type="InParanoid" id="Q8TL48"/>
<dbReference type="OrthoDB" id="5619at2157"/>
<dbReference type="PhylomeDB" id="Q8TL48"/>
<dbReference type="Proteomes" id="UP000002487">
    <property type="component" value="Chromosome"/>
</dbReference>
<dbReference type="GO" id="GO:1990904">
    <property type="term" value="C:ribonucleoprotein complex"/>
    <property type="evidence" value="ECO:0007669"/>
    <property type="project" value="UniProtKB-KW"/>
</dbReference>
<dbReference type="GO" id="GO:0005840">
    <property type="term" value="C:ribosome"/>
    <property type="evidence" value="ECO:0007669"/>
    <property type="project" value="UniProtKB-KW"/>
</dbReference>
<dbReference type="GO" id="GO:0019843">
    <property type="term" value="F:rRNA binding"/>
    <property type="evidence" value="ECO:0007669"/>
    <property type="project" value="UniProtKB-KW"/>
</dbReference>
<dbReference type="GO" id="GO:0003735">
    <property type="term" value="F:structural constituent of ribosome"/>
    <property type="evidence" value="ECO:0007669"/>
    <property type="project" value="InterPro"/>
</dbReference>
<dbReference type="GO" id="GO:0008270">
    <property type="term" value="F:zinc ion binding"/>
    <property type="evidence" value="ECO:0007669"/>
    <property type="project" value="UniProtKB-UniRule"/>
</dbReference>
<dbReference type="GO" id="GO:0006412">
    <property type="term" value="P:translation"/>
    <property type="evidence" value="ECO:0007669"/>
    <property type="project" value="UniProtKB-UniRule"/>
</dbReference>
<dbReference type="FunFam" id="2.20.25.30:FF:000003">
    <property type="entry name" value="50S ribosomal protein L37e"/>
    <property type="match status" value="1"/>
</dbReference>
<dbReference type="Gene3D" id="2.20.25.30">
    <property type="match status" value="1"/>
</dbReference>
<dbReference type="HAMAP" id="MF_00547">
    <property type="entry name" value="Ribosomal_eL37"/>
    <property type="match status" value="1"/>
</dbReference>
<dbReference type="InterPro" id="IPR001569">
    <property type="entry name" value="Ribosomal_eL37"/>
</dbReference>
<dbReference type="InterPro" id="IPR011331">
    <property type="entry name" value="Ribosomal_eL37/eL43"/>
</dbReference>
<dbReference type="InterPro" id="IPR018267">
    <property type="entry name" value="Ribosomal_eL37_CS"/>
</dbReference>
<dbReference type="InterPro" id="IPR011332">
    <property type="entry name" value="Ribosomal_zn-bd"/>
</dbReference>
<dbReference type="NCBIfam" id="NF003214">
    <property type="entry name" value="PRK04179.1"/>
    <property type="match status" value="1"/>
</dbReference>
<dbReference type="PANTHER" id="PTHR10768">
    <property type="entry name" value="60S RIBOSOMAL PROTEIN L37"/>
    <property type="match status" value="1"/>
</dbReference>
<dbReference type="PANTHER" id="PTHR10768:SF0">
    <property type="entry name" value="RIBOSOMAL PROTEIN L37"/>
    <property type="match status" value="1"/>
</dbReference>
<dbReference type="Pfam" id="PF01907">
    <property type="entry name" value="Ribosomal_L37e"/>
    <property type="match status" value="1"/>
</dbReference>
<dbReference type="SUPFAM" id="SSF57829">
    <property type="entry name" value="Zn-binding ribosomal proteins"/>
    <property type="match status" value="1"/>
</dbReference>
<dbReference type="PROSITE" id="PS01077">
    <property type="entry name" value="RIBOSOMAL_L37E"/>
    <property type="match status" value="1"/>
</dbReference>
<organism>
    <name type="scientific">Methanosarcina acetivorans (strain ATCC 35395 / DSM 2834 / JCM 12185 / C2A)</name>
    <dbReference type="NCBI Taxonomy" id="188937"/>
    <lineage>
        <taxon>Archaea</taxon>
        <taxon>Methanobacteriati</taxon>
        <taxon>Methanobacteriota</taxon>
        <taxon>Stenosarchaea group</taxon>
        <taxon>Methanomicrobia</taxon>
        <taxon>Methanosarcinales</taxon>
        <taxon>Methanosarcinaceae</taxon>
        <taxon>Methanosarcina</taxon>
    </lineage>
</organism>
<gene>
    <name type="primary">rpl37e</name>
    <name type="ordered locus">MA_3194</name>
</gene>
<evidence type="ECO:0000250" key="1"/>
<evidence type="ECO:0000255" key="2"/>
<evidence type="ECO:0000305" key="3"/>